<keyword id="KW-0227">DNA damage</keyword>
<keyword id="KW-0234">DNA repair</keyword>
<keyword id="KW-0235">DNA replication</keyword>
<keyword id="KW-0255">Endonuclease</keyword>
<keyword id="KW-0269">Exonuclease</keyword>
<keyword id="KW-0378">Hydrolase</keyword>
<keyword id="KW-0460">Magnesium</keyword>
<keyword id="KW-0479">Metal-binding</keyword>
<keyword id="KW-0496">Mitochondrion</keyword>
<keyword id="KW-0540">Nuclease</keyword>
<keyword id="KW-0539">Nucleus</keyword>
<keyword id="KW-0597">Phosphoprotein</keyword>
<keyword id="KW-1185">Reference proteome</keyword>
<evidence type="ECO:0000255" key="1">
    <source>
        <dbReference type="HAMAP-Rule" id="MF_03140"/>
    </source>
</evidence>
<feature type="chain" id="PRO_0000403529" description="Flap endonuclease 1-B">
    <location>
        <begin position="1"/>
        <end position="428"/>
    </location>
</feature>
<feature type="region of interest" description="N-domain">
    <location>
        <begin position="1"/>
        <end position="132"/>
    </location>
</feature>
<feature type="region of interest" description="I-domain">
    <location>
        <begin position="150"/>
        <end position="281"/>
    </location>
</feature>
<feature type="binding site" evidence="1">
    <location>
        <position position="34"/>
    </location>
    <ligand>
        <name>Mg(2+)</name>
        <dbReference type="ChEBI" id="CHEBI:18420"/>
        <label>1</label>
    </ligand>
</feature>
<feature type="binding site" evidence="1">
    <location>
        <position position="98"/>
    </location>
    <ligand>
        <name>DNA</name>
        <dbReference type="ChEBI" id="CHEBI:16991"/>
    </ligand>
</feature>
<feature type="binding site" evidence="1">
    <location>
        <position position="114"/>
    </location>
    <ligand>
        <name>Mg(2+)</name>
        <dbReference type="ChEBI" id="CHEBI:18420"/>
        <label>1</label>
    </ligand>
</feature>
<feature type="binding site" evidence="1">
    <location>
        <position position="186"/>
    </location>
    <ligand>
        <name>DNA</name>
        <dbReference type="ChEBI" id="CHEBI:16991"/>
    </ligand>
</feature>
<feature type="binding site" evidence="1">
    <location>
        <position position="186"/>
    </location>
    <ligand>
        <name>Mg(2+)</name>
        <dbReference type="ChEBI" id="CHEBI:18420"/>
        <label>1</label>
    </ligand>
</feature>
<feature type="binding site" evidence="1">
    <location>
        <position position="188"/>
    </location>
    <ligand>
        <name>Mg(2+)</name>
        <dbReference type="ChEBI" id="CHEBI:18420"/>
        <label>1</label>
    </ligand>
</feature>
<feature type="binding site" evidence="1">
    <location>
        <position position="207"/>
    </location>
    <ligand>
        <name>Mg(2+)</name>
        <dbReference type="ChEBI" id="CHEBI:18420"/>
        <label>2</label>
    </ligand>
</feature>
<feature type="binding site" evidence="1">
    <location>
        <position position="209"/>
    </location>
    <ligand>
        <name>Mg(2+)</name>
        <dbReference type="ChEBI" id="CHEBI:18420"/>
        <label>2</label>
    </ligand>
</feature>
<feature type="binding site" evidence="1">
    <location>
        <position position="259"/>
    </location>
    <ligand>
        <name>DNA</name>
        <dbReference type="ChEBI" id="CHEBI:16991"/>
    </ligand>
</feature>
<feature type="binding site" evidence="1">
    <location>
        <position position="261"/>
    </location>
    <ligand>
        <name>DNA</name>
        <dbReference type="ChEBI" id="CHEBI:16991"/>
    </ligand>
</feature>
<feature type="binding site" evidence="1">
    <location>
        <position position="261"/>
    </location>
    <ligand>
        <name>Mg(2+)</name>
        <dbReference type="ChEBI" id="CHEBI:18420"/>
        <label>2</label>
    </ligand>
</feature>
<accession>C5WU23</accession>
<proteinExistence type="inferred from homology"/>
<reference key="1">
    <citation type="journal article" date="2009" name="Nature">
        <title>The Sorghum bicolor genome and the diversification of grasses.</title>
        <authorList>
            <person name="Paterson A.H."/>
            <person name="Bowers J.E."/>
            <person name="Bruggmann R."/>
            <person name="Dubchak I."/>
            <person name="Grimwood J."/>
            <person name="Gundlach H."/>
            <person name="Haberer G."/>
            <person name="Hellsten U."/>
            <person name="Mitros T."/>
            <person name="Poliakov A."/>
            <person name="Schmutz J."/>
            <person name="Spannagl M."/>
            <person name="Tang H."/>
            <person name="Wang X."/>
            <person name="Wicker T."/>
            <person name="Bharti A.K."/>
            <person name="Chapman J."/>
            <person name="Feltus F.A."/>
            <person name="Gowik U."/>
            <person name="Grigoriev I.V."/>
            <person name="Lyons E."/>
            <person name="Maher C.A."/>
            <person name="Martis M."/>
            <person name="Narechania A."/>
            <person name="Otillar R.P."/>
            <person name="Penning B.W."/>
            <person name="Salamov A.A."/>
            <person name="Wang Y."/>
            <person name="Zhang L."/>
            <person name="Carpita N.C."/>
            <person name="Freeling M."/>
            <person name="Gingle A.R."/>
            <person name="Hash C.T."/>
            <person name="Keller B."/>
            <person name="Klein P."/>
            <person name="Kresovich S."/>
            <person name="McCann M.C."/>
            <person name="Ming R."/>
            <person name="Peterson D.G."/>
            <person name="Mehboob-ur-Rahman M."/>
            <person name="Ware D."/>
            <person name="Westhoff P."/>
            <person name="Mayer K.F.X."/>
            <person name="Messing J."/>
            <person name="Rokhsar D.S."/>
        </authorList>
    </citation>
    <scope>NUCLEOTIDE SEQUENCE [LARGE SCALE GENOMIC DNA]</scope>
    <source>
        <strain>cv. BTx623</strain>
    </source>
</reference>
<reference key="2">
    <citation type="journal article" date="2018" name="Plant J.">
        <title>The Sorghum bicolor reference genome: improved assembly, gene annotations, a transcriptome atlas, and signatures of genome organization.</title>
        <authorList>
            <person name="McCormick R.F."/>
            <person name="Truong S.K."/>
            <person name="Sreedasyam A."/>
            <person name="Jenkins J."/>
            <person name="Shu S."/>
            <person name="Sims D."/>
            <person name="Kennedy M."/>
            <person name="Amirebrahimi M."/>
            <person name="Weers B.D."/>
            <person name="McKinley B."/>
            <person name="Mattison A."/>
            <person name="Morishige D.T."/>
            <person name="Grimwood J."/>
            <person name="Schmutz J."/>
            <person name="Mullet J.E."/>
        </authorList>
    </citation>
    <scope>GENOME REANNOTATION</scope>
    <source>
        <strain>cv. BTx623</strain>
    </source>
</reference>
<name>FEN12_SORBI</name>
<sequence length="428" mass="47529">MGIKGLTKVLAEHAPRAAVQRRVEDYRGRVIAVDASLSIYQFLIVVGRKGSELLTNEAGEVTRQETSLALPVSDHCIPAYLTFHLCELCSHLQGMLNRTVRMLEAGIKPVFVFDGEPPEMKKKELAKRSLKRDDATKDLNRAIEIGDEDAVEKFSKRTVKVTRKHNDDCKRLLRLMGVPVVEAPGEAEAQCAALCENHQVYAVASEDMDSLTFGARRFLRHLTDLGYKKSPVTEFDVSKVLEELGLTMDQFIDLCILSGCDYCENIKGIGGQRALKLIRQHGCIEEVLQNLNQTRFSVPEDWPYQEVRTLFKEPNVSAGISDFTWTSPDTEGLMGFLSTENSFSPDRVTKAVEKIKAARDRYSPGRLKHLTPVASLPGTHTGKEPKCILGSPGQSLKLINYCSSSSTSNAGYRYTVDLSLLAFKGLIS</sequence>
<organism>
    <name type="scientific">Sorghum bicolor</name>
    <name type="common">Sorghum</name>
    <name type="synonym">Sorghum vulgare</name>
    <dbReference type="NCBI Taxonomy" id="4558"/>
    <lineage>
        <taxon>Eukaryota</taxon>
        <taxon>Viridiplantae</taxon>
        <taxon>Streptophyta</taxon>
        <taxon>Embryophyta</taxon>
        <taxon>Tracheophyta</taxon>
        <taxon>Spermatophyta</taxon>
        <taxon>Magnoliopsida</taxon>
        <taxon>Liliopsida</taxon>
        <taxon>Poales</taxon>
        <taxon>Poaceae</taxon>
        <taxon>PACMAD clade</taxon>
        <taxon>Panicoideae</taxon>
        <taxon>Andropogonodae</taxon>
        <taxon>Andropogoneae</taxon>
        <taxon>Sorghinae</taxon>
        <taxon>Sorghum</taxon>
    </lineage>
</organism>
<protein>
    <recommendedName>
        <fullName evidence="1">Flap endonuclease 1-B</fullName>
        <shortName evidence="1">FEN-1-B</shortName>
        <ecNumber evidence="1">3.1.-.-</ecNumber>
    </recommendedName>
    <alternativeName>
        <fullName evidence="1">Flap structure-specific endonuclease 1-B</fullName>
    </alternativeName>
</protein>
<dbReference type="EC" id="3.1.-.-" evidence="1"/>
<dbReference type="EMBL" id="CM000760">
    <property type="protein sequence ID" value="EER90588.1"/>
    <property type="molecule type" value="Genomic_DNA"/>
</dbReference>
<dbReference type="SMR" id="C5WU23"/>
<dbReference type="FunCoup" id="C5WU23">
    <property type="interactions" value="1819"/>
</dbReference>
<dbReference type="STRING" id="4558.C5WU23"/>
<dbReference type="EnsemblPlants" id="EER90588">
    <property type="protein sequence ID" value="EER90588"/>
    <property type="gene ID" value="SORBI_3001G027100"/>
</dbReference>
<dbReference type="Gramene" id="EER90588">
    <property type="protein sequence ID" value="EER90588"/>
    <property type="gene ID" value="SORBI_3001G027100"/>
</dbReference>
<dbReference type="InParanoid" id="C5WU23"/>
<dbReference type="OMA" id="IQEVHID"/>
<dbReference type="Proteomes" id="UP000000768">
    <property type="component" value="Chromosome 1"/>
</dbReference>
<dbReference type="GO" id="GO:0005739">
    <property type="term" value="C:mitochondrion"/>
    <property type="evidence" value="ECO:0007669"/>
    <property type="project" value="UniProtKB-SubCell"/>
</dbReference>
<dbReference type="GO" id="GO:0005730">
    <property type="term" value="C:nucleolus"/>
    <property type="evidence" value="ECO:0007669"/>
    <property type="project" value="UniProtKB-SubCell"/>
</dbReference>
<dbReference type="GO" id="GO:0005654">
    <property type="term" value="C:nucleoplasm"/>
    <property type="evidence" value="ECO:0007669"/>
    <property type="project" value="UniProtKB-SubCell"/>
</dbReference>
<dbReference type="GO" id="GO:0008409">
    <property type="term" value="F:5'-3' exonuclease activity"/>
    <property type="evidence" value="ECO:0000318"/>
    <property type="project" value="GO_Central"/>
</dbReference>
<dbReference type="GO" id="GO:0017108">
    <property type="term" value="F:5'-flap endonuclease activity"/>
    <property type="evidence" value="ECO:0000318"/>
    <property type="project" value="GO_Central"/>
</dbReference>
<dbReference type="GO" id="GO:0003677">
    <property type="term" value="F:DNA binding"/>
    <property type="evidence" value="ECO:0007669"/>
    <property type="project" value="UniProtKB-UniRule"/>
</dbReference>
<dbReference type="GO" id="GO:0000287">
    <property type="term" value="F:magnesium ion binding"/>
    <property type="evidence" value="ECO:0007669"/>
    <property type="project" value="UniProtKB-UniRule"/>
</dbReference>
<dbReference type="GO" id="GO:0006284">
    <property type="term" value="P:base-excision repair"/>
    <property type="evidence" value="ECO:0007669"/>
    <property type="project" value="UniProtKB-UniRule"/>
</dbReference>
<dbReference type="GO" id="GO:0043137">
    <property type="term" value="P:DNA replication, removal of RNA primer"/>
    <property type="evidence" value="ECO:0007669"/>
    <property type="project" value="UniProtKB-UniRule"/>
</dbReference>
<dbReference type="CDD" id="cd09907">
    <property type="entry name" value="H3TH_FEN1-Euk"/>
    <property type="match status" value="1"/>
</dbReference>
<dbReference type="CDD" id="cd09867">
    <property type="entry name" value="PIN_FEN1"/>
    <property type="match status" value="1"/>
</dbReference>
<dbReference type="FunFam" id="1.10.150.20:FF:000009">
    <property type="entry name" value="Flap endonuclease 1"/>
    <property type="match status" value="1"/>
</dbReference>
<dbReference type="FunFam" id="3.40.50.1010:FF:000016">
    <property type="entry name" value="Flap endonuclease 1"/>
    <property type="match status" value="1"/>
</dbReference>
<dbReference type="Gene3D" id="1.10.150.20">
    <property type="entry name" value="5' to 3' exonuclease, C-terminal subdomain"/>
    <property type="match status" value="1"/>
</dbReference>
<dbReference type="Gene3D" id="3.40.50.1010">
    <property type="entry name" value="5'-nuclease"/>
    <property type="match status" value="1"/>
</dbReference>
<dbReference type="HAMAP" id="MF_00614">
    <property type="entry name" value="Fen"/>
    <property type="match status" value="1"/>
</dbReference>
<dbReference type="InterPro" id="IPR036279">
    <property type="entry name" value="5-3_exonuclease_C_sf"/>
</dbReference>
<dbReference type="InterPro" id="IPR023426">
    <property type="entry name" value="Flap_endonuc"/>
</dbReference>
<dbReference type="InterPro" id="IPR008918">
    <property type="entry name" value="HhH2"/>
</dbReference>
<dbReference type="InterPro" id="IPR029060">
    <property type="entry name" value="PIN-like_dom_sf"/>
</dbReference>
<dbReference type="InterPro" id="IPR006086">
    <property type="entry name" value="XPG-I_dom"/>
</dbReference>
<dbReference type="InterPro" id="IPR006084">
    <property type="entry name" value="XPG/Rad2"/>
</dbReference>
<dbReference type="InterPro" id="IPR019974">
    <property type="entry name" value="XPG_CS"/>
</dbReference>
<dbReference type="InterPro" id="IPR006085">
    <property type="entry name" value="XPG_DNA_repair_N"/>
</dbReference>
<dbReference type="PANTHER" id="PTHR11081:SF56">
    <property type="entry name" value="FLAP ENDONUCLEASE 1-B"/>
    <property type="match status" value="1"/>
</dbReference>
<dbReference type="PANTHER" id="PTHR11081">
    <property type="entry name" value="FLAP ENDONUCLEASE FAMILY MEMBER"/>
    <property type="match status" value="1"/>
</dbReference>
<dbReference type="Pfam" id="PF00867">
    <property type="entry name" value="XPG_I"/>
    <property type="match status" value="1"/>
</dbReference>
<dbReference type="Pfam" id="PF00752">
    <property type="entry name" value="XPG_N"/>
    <property type="match status" value="1"/>
</dbReference>
<dbReference type="PRINTS" id="PR00853">
    <property type="entry name" value="XPGRADSUPER"/>
</dbReference>
<dbReference type="SMART" id="SM00279">
    <property type="entry name" value="HhH2"/>
    <property type="match status" value="1"/>
</dbReference>
<dbReference type="SMART" id="SM00484">
    <property type="entry name" value="XPGI"/>
    <property type="match status" value="1"/>
</dbReference>
<dbReference type="SMART" id="SM00485">
    <property type="entry name" value="XPGN"/>
    <property type="match status" value="1"/>
</dbReference>
<dbReference type="SUPFAM" id="SSF47807">
    <property type="entry name" value="5' to 3' exonuclease, C-terminal subdomain"/>
    <property type="match status" value="1"/>
</dbReference>
<dbReference type="SUPFAM" id="SSF88723">
    <property type="entry name" value="PIN domain-like"/>
    <property type="match status" value="1"/>
</dbReference>
<dbReference type="PROSITE" id="PS00841">
    <property type="entry name" value="XPG_1"/>
    <property type="match status" value="1"/>
</dbReference>
<dbReference type="PROSITE" id="PS00842">
    <property type="entry name" value="XPG_2"/>
    <property type="match status" value="1"/>
</dbReference>
<comment type="function">
    <text evidence="1">Structure-specific nuclease with 5'-flap endonuclease and 5'-3' exonuclease activities involved in DNA replication and repair. During DNA replication, cleaves the 5'-overhanging flap structure that is generated by displacement synthesis when DNA polymerase encounters the 5'-end of a downstream Okazaki fragment. It enters the flap from the 5'-end and then tracks to cleave the flap base, leaving a nick for ligation. Also involved in the long patch base excision repair (LP-BER) pathway, by cleaving within the apurinic/apyrimidinic (AP) site-terminated flap. Acts as a genome stabilization factor that prevents flaps from equilibrating into structures that lead to duplications and deletions. Also possesses 5'-3' exonuclease activity on nicked or gapped double-stranded DNA, and exhibits RNase H activity. Also involved in replication and repair of rDNA and in repairing mitochondrial DNA.</text>
</comment>
<comment type="cofactor">
    <cofactor evidence="1">
        <name>Mg(2+)</name>
        <dbReference type="ChEBI" id="CHEBI:18420"/>
    </cofactor>
    <text evidence="1">Binds 2 magnesium ions per subunit. They probably participate in the reaction catalyzed by the enzyme. May bind an additional third magnesium ion after substrate binding.</text>
</comment>
<comment type="subunit">
    <text evidence="1">Interacts with PCNA. Three molecules of FEN1 bind to one PCNA trimer with each molecule binding to one PCNA monomer. PCNA stimulates the nuclease activity without altering cleavage specificity.</text>
</comment>
<comment type="subcellular location">
    <subcellularLocation>
        <location evidence="1">Nucleus</location>
        <location evidence="1">Nucleolus</location>
    </subcellularLocation>
    <subcellularLocation>
        <location evidence="1">Nucleus</location>
        <location evidence="1">Nucleoplasm</location>
    </subcellularLocation>
    <subcellularLocation>
        <location evidence="1">Mitochondrion</location>
    </subcellularLocation>
    <text evidence="1">Resides mostly in the nucleoli and relocalizes to the nucleoplasm upon DNA damage.</text>
</comment>
<comment type="PTM">
    <text evidence="1">Phosphorylated. Phosphorylation upon DNA damage induces relocalization to the nuclear plasma.</text>
</comment>
<comment type="similarity">
    <text evidence="1">Belongs to the XPG/RAD2 endonuclease family. FEN1 subfamily.</text>
</comment>
<gene>
    <name evidence="1" type="primary">FEN1-B</name>
    <name type="ordered locus">Sb01g002580</name>
</gene>